<dbReference type="EC" id="3.4.23.36" evidence="1"/>
<dbReference type="EMBL" id="CP000890">
    <property type="protein sequence ID" value="ABX78276.1"/>
    <property type="molecule type" value="Genomic_DNA"/>
</dbReference>
<dbReference type="SMR" id="A9NBM6"/>
<dbReference type="KEGG" id="cbs:COXBURSA331_A0509"/>
<dbReference type="HOGENOM" id="CLU_083252_4_0_6"/>
<dbReference type="UniPathway" id="UPA00665"/>
<dbReference type="GO" id="GO:0005886">
    <property type="term" value="C:plasma membrane"/>
    <property type="evidence" value="ECO:0007669"/>
    <property type="project" value="UniProtKB-SubCell"/>
</dbReference>
<dbReference type="GO" id="GO:0004190">
    <property type="term" value="F:aspartic-type endopeptidase activity"/>
    <property type="evidence" value="ECO:0007669"/>
    <property type="project" value="UniProtKB-UniRule"/>
</dbReference>
<dbReference type="GO" id="GO:0006508">
    <property type="term" value="P:proteolysis"/>
    <property type="evidence" value="ECO:0007669"/>
    <property type="project" value="UniProtKB-KW"/>
</dbReference>
<dbReference type="HAMAP" id="MF_00161">
    <property type="entry name" value="LspA"/>
    <property type="match status" value="1"/>
</dbReference>
<dbReference type="InterPro" id="IPR001872">
    <property type="entry name" value="Peptidase_A8"/>
</dbReference>
<dbReference type="NCBIfam" id="TIGR00077">
    <property type="entry name" value="lspA"/>
    <property type="match status" value="1"/>
</dbReference>
<dbReference type="PANTHER" id="PTHR33695">
    <property type="entry name" value="LIPOPROTEIN SIGNAL PEPTIDASE"/>
    <property type="match status" value="1"/>
</dbReference>
<dbReference type="PANTHER" id="PTHR33695:SF1">
    <property type="entry name" value="LIPOPROTEIN SIGNAL PEPTIDASE"/>
    <property type="match status" value="1"/>
</dbReference>
<dbReference type="Pfam" id="PF01252">
    <property type="entry name" value="Peptidase_A8"/>
    <property type="match status" value="1"/>
</dbReference>
<dbReference type="PRINTS" id="PR00781">
    <property type="entry name" value="LIPOSIGPTASE"/>
</dbReference>
<dbReference type="PROSITE" id="PS00855">
    <property type="entry name" value="SPASE_II"/>
    <property type="match status" value="1"/>
</dbReference>
<proteinExistence type="inferred from homology"/>
<protein>
    <recommendedName>
        <fullName evidence="1">Lipoprotein signal peptidase</fullName>
        <ecNumber evidence="1">3.4.23.36</ecNumber>
    </recommendedName>
    <alternativeName>
        <fullName evidence="1">Prolipoprotein signal peptidase</fullName>
    </alternativeName>
    <alternativeName>
        <fullName evidence="1">Signal peptidase II</fullName>
        <shortName evidence="1">SPase II</shortName>
    </alternativeName>
</protein>
<sequence>MVTKKSKKAWPWLWFSVLVILLDQLSKYLANHFLSLGHPVKILPFLNFTLNYNTGAAFSFLGTENGWQIIFFAAISFVVSIFLILWLSRTSRSEIMMSLGLSLIIGGALGNFIDRLRWSYVTDFIDFHIKDWHFATFNVADSAICVGVFLLIVHMLLTPSSKP</sequence>
<name>LSPA_COXBR</name>
<comment type="function">
    <text evidence="1">This protein specifically catalyzes the removal of signal peptides from prolipoproteins.</text>
</comment>
<comment type="catalytic activity">
    <reaction evidence="1">
        <text>Release of signal peptides from bacterial membrane prolipoproteins. Hydrolyzes -Xaa-Yaa-Zaa-|-(S,diacylglyceryl)Cys-, in which Xaa is hydrophobic (preferably Leu), and Yaa (Ala or Ser) and Zaa (Gly or Ala) have small, neutral side chains.</text>
        <dbReference type="EC" id="3.4.23.36"/>
    </reaction>
</comment>
<comment type="pathway">
    <text evidence="1">Protein modification; lipoprotein biosynthesis (signal peptide cleavage).</text>
</comment>
<comment type="subcellular location">
    <subcellularLocation>
        <location evidence="1">Cell inner membrane</location>
        <topology evidence="1">Multi-pass membrane protein</topology>
    </subcellularLocation>
</comment>
<comment type="similarity">
    <text evidence="1">Belongs to the peptidase A8 family.</text>
</comment>
<keyword id="KW-0064">Aspartyl protease</keyword>
<keyword id="KW-0997">Cell inner membrane</keyword>
<keyword id="KW-1003">Cell membrane</keyword>
<keyword id="KW-0378">Hydrolase</keyword>
<keyword id="KW-0472">Membrane</keyword>
<keyword id="KW-0645">Protease</keyword>
<keyword id="KW-0812">Transmembrane</keyword>
<keyword id="KW-1133">Transmembrane helix</keyword>
<reference key="1">
    <citation type="submission" date="2007-11" db="EMBL/GenBank/DDBJ databases">
        <title>Genome sequencing of phylogenetically and phenotypically diverse Coxiella burnetii isolates.</title>
        <authorList>
            <person name="Seshadri R."/>
            <person name="Samuel J.E."/>
        </authorList>
    </citation>
    <scope>NUCLEOTIDE SEQUENCE [LARGE SCALE GENOMIC DNA]</scope>
    <source>
        <strain>RSA 331 / Henzerling II</strain>
    </source>
</reference>
<evidence type="ECO:0000255" key="1">
    <source>
        <dbReference type="HAMAP-Rule" id="MF_00161"/>
    </source>
</evidence>
<gene>
    <name evidence="1" type="primary">lspA</name>
    <name type="ordered locus">COXBURSA331_A0509</name>
</gene>
<feature type="chain" id="PRO_1000076921" description="Lipoprotein signal peptidase">
    <location>
        <begin position="1"/>
        <end position="163"/>
    </location>
</feature>
<feature type="transmembrane region" description="Helical" evidence="1">
    <location>
        <begin position="9"/>
        <end position="29"/>
    </location>
</feature>
<feature type="transmembrane region" description="Helical" evidence="1">
    <location>
        <begin position="42"/>
        <end position="62"/>
    </location>
</feature>
<feature type="transmembrane region" description="Helical" evidence="1">
    <location>
        <begin position="67"/>
        <end position="87"/>
    </location>
</feature>
<feature type="transmembrane region" description="Helical" evidence="1">
    <location>
        <begin position="93"/>
        <end position="113"/>
    </location>
</feature>
<feature type="transmembrane region" description="Helical" evidence="1">
    <location>
        <begin position="137"/>
        <end position="157"/>
    </location>
</feature>
<feature type="active site" evidence="1">
    <location>
        <position position="123"/>
    </location>
</feature>
<feature type="active site" evidence="1">
    <location>
        <position position="141"/>
    </location>
</feature>
<accession>A9NBM6</accession>
<organism>
    <name type="scientific">Coxiella burnetii (strain RSA 331 / Henzerling II)</name>
    <dbReference type="NCBI Taxonomy" id="360115"/>
    <lineage>
        <taxon>Bacteria</taxon>
        <taxon>Pseudomonadati</taxon>
        <taxon>Pseudomonadota</taxon>
        <taxon>Gammaproteobacteria</taxon>
        <taxon>Legionellales</taxon>
        <taxon>Coxiellaceae</taxon>
        <taxon>Coxiella</taxon>
    </lineage>
</organism>